<proteinExistence type="inferred from homology"/>
<name>IF2_EDWI9</name>
<feature type="chain" id="PRO_1000202771" description="Translation initiation factor IF-2">
    <location>
        <begin position="1"/>
        <end position="901"/>
    </location>
</feature>
<feature type="domain" description="tr-type G">
    <location>
        <begin position="400"/>
        <end position="569"/>
    </location>
</feature>
<feature type="region of interest" description="Disordered" evidence="3">
    <location>
        <begin position="48"/>
        <end position="313"/>
    </location>
</feature>
<feature type="region of interest" description="G1" evidence="1">
    <location>
        <begin position="409"/>
        <end position="416"/>
    </location>
</feature>
<feature type="region of interest" description="G2" evidence="1">
    <location>
        <begin position="434"/>
        <end position="438"/>
    </location>
</feature>
<feature type="region of interest" description="G3" evidence="1">
    <location>
        <begin position="455"/>
        <end position="458"/>
    </location>
</feature>
<feature type="region of interest" description="G4" evidence="1">
    <location>
        <begin position="509"/>
        <end position="512"/>
    </location>
</feature>
<feature type="region of interest" description="G5" evidence="1">
    <location>
        <begin position="545"/>
        <end position="547"/>
    </location>
</feature>
<feature type="compositionally biased region" description="Polar residues" evidence="3">
    <location>
        <begin position="68"/>
        <end position="82"/>
    </location>
</feature>
<feature type="compositionally biased region" description="Basic and acidic residues" evidence="3">
    <location>
        <begin position="106"/>
        <end position="226"/>
    </location>
</feature>
<feature type="compositionally biased region" description="Basic residues" evidence="3">
    <location>
        <begin position="263"/>
        <end position="277"/>
    </location>
</feature>
<feature type="compositionally biased region" description="Basic and acidic residues" evidence="3">
    <location>
        <begin position="278"/>
        <end position="291"/>
    </location>
</feature>
<feature type="binding site" evidence="2">
    <location>
        <begin position="409"/>
        <end position="416"/>
    </location>
    <ligand>
        <name>GTP</name>
        <dbReference type="ChEBI" id="CHEBI:37565"/>
    </ligand>
</feature>
<feature type="binding site" evidence="2">
    <location>
        <begin position="455"/>
        <end position="459"/>
    </location>
    <ligand>
        <name>GTP</name>
        <dbReference type="ChEBI" id="CHEBI:37565"/>
    </ligand>
</feature>
<feature type="binding site" evidence="2">
    <location>
        <begin position="509"/>
        <end position="512"/>
    </location>
    <ligand>
        <name>GTP</name>
        <dbReference type="ChEBI" id="CHEBI:37565"/>
    </ligand>
</feature>
<protein>
    <recommendedName>
        <fullName evidence="2">Translation initiation factor IF-2</fullName>
    </recommendedName>
</protein>
<sequence>MAEVTVKSLAAEIQTSVERLVQQLADAGINKSPDDSVSPQEREALLAHLNREHGGSSDKLTLQRKTRSTLSVPGTGGKSKSVQIEVRKKRTYVKSDAAAQQAEAEALAKREAEEQVKREAEEQTQRDMAELAKREAAEQAKRQQEEQAKREAAEKAKREAAEKEKVTNQHIDEKTKAAQAEKAKREAEAAELKRKAEEEARRKLEEDARKVAEEARRMAEANEGKWTENASEEDNSDYHVTTSHHAREAEDENDRQVEGDRRARGRGGKAAKQKKGSKLSESKADREEARAVNRGGKGGKRKPSSLQQGFTKPAQAVNRDVVIGETITVAELANKMAVKGSQVIKAMMKMGAMATINQVIDQETAQLVAEDMGHKVILRRENELEEAVLSDRDTGAAAEPRAPVVTIMGHVDHGKTSLLDYIRSTKVAAGEAGGITQHIGAYHVQTDNGMITFLDTPGHAAFTAMRARGAQATDIVVLVVAADDGVMPQTIEAVQHAKAAGVPLVVAVNKIDKPEADPDRVKNELSQYGVMPEEWGGEAQFVHVSAKAGTGIDELLDAILLQAEVLELKAVRNGMASGVVIESFLDKGRGPVATVLVREGTLNKGDIVLCGFEYGRVRAMRDELGREITEAGPSIPVEILGMSGVPAAGDEATVVRDEKKAREVALYRQGKFREVKLARQQKAKLENMFSNMVEGEVSELNIVLKADVQGSVEAIADSLRKLSTDEVKVKIVGSGVGGITETDATLAAASNAILLGFNVRADASARRVVEAENLDLRYYSVIYDLIDEVKQAMSGMLAPEYKQEIIGLAEVRDVFKSPKFGAIAGCMVTEGVVKRHSPIRVLRENVVIYEGELESLRRFKDDVNEVRNGMECGIGVKNYNDVRPGDVIEVFETIEVKRTID</sequence>
<evidence type="ECO:0000250" key="1"/>
<evidence type="ECO:0000255" key="2">
    <source>
        <dbReference type="HAMAP-Rule" id="MF_00100"/>
    </source>
</evidence>
<evidence type="ECO:0000256" key="3">
    <source>
        <dbReference type="SAM" id="MobiDB-lite"/>
    </source>
</evidence>
<accession>C5BFB7</accession>
<comment type="function">
    <text evidence="2">One of the essential components for the initiation of protein synthesis. Protects formylmethionyl-tRNA from spontaneous hydrolysis and promotes its binding to the 30S ribosomal subunits. Also involved in the hydrolysis of GTP during the formation of the 70S ribosomal complex.</text>
</comment>
<comment type="subcellular location">
    <subcellularLocation>
        <location evidence="2">Cytoplasm</location>
    </subcellularLocation>
</comment>
<comment type="similarity">
    <text evidence="2">Belongs to the TRAFAC class translation factor GTPase superfamily. Classic translation factor GTPase family. IF-2 subfamily.</text>
</comment>
<organism>
    <name type="scientific">Edwardsiella ictaluri (strain 93-146)</name>
    <dbReference type="NCBI Taxonomy" id="634503"/>
    <lineage>
        <taxon>Bacteria</taxon>
        <taxon>Pseudomonadati</taxon>
        <taxon>Pseudomonadota</taxon>
        <taxon>Gammaproteobacteria</taxon>
        <taxon>Enterobacterales</taxon>
        <taxon>Hafniaceae</taxon>
        <taxon>Edwardsiella</taxon>
    </lineage>
</organism>
<dbReference type="EMBL" id="CP001600">
    <property type="protein sequence ID" value="ACR67703.1"/>
    <property type="molecule type" value="Genomic_DNA"/>
</dbReference>
<dbReference type="RefSeq" id="WP_015869905.1">
    <property type="nucleotide sequence ID" value="NZ_CP169062.1"/>
</dbReference>
<dbReference type="SMR" id="C5BFB7"/>
<dbReference type="STRING" id="67780.B6E78_13095"/>
<dbReference type="GeneID" id="69537554"/>
<dbReference type="KEGG" id="eic:NT01EI_0467"/>
<dbReference type="PATRIC" id="fig|634503.3.peg.424"/>
<dbReference type="HOGENOM" id="CLU_006301_6_3_6"/>
<dbReference type="OrthoDB" id="9811804at2"/>
<dbReference type="Proteomes" id="UP000001485">
    <property type="component" value="Chromosome"/>
</dbReference>
<dbReference type="GO" id="GO:0005829">
    <property type="term" value="C:cytosol"/>
    <property type="evidence" value="ECO:0007669"/>
    <property type="project" value="TreeGrafter"/>
</dbReference>
<dbReference type="GO" id="GO:0005525">
    <property type="term" value="F:GTP binding"/>
    <property type="evidence" value="ECO:0007669"/>
    <property type="project" value="UniProtKB-KW"/>
</dbReference>
<dbReference type="GO" id="GO:0003924">
    <property type="term" value="F:GTPase activity"/>
    <property type="evidence" value="ECO:0007669"/>
    <property type="project" value="UniProtKB-UniRule"/>
</dbReference>
<dbReference type="GO" id="GO:0097216">
    <property type="term" value="F:guanosine tetraphosphate binding"/>
    <property type="evidence" value="ECO:0007669"/>
    <property type="project" value="UniProtKB-ARBA"/>
</dbReference>
<dbReference type="GO" id="GO:0003743">
    <property type="term" value="F:translation initiation factor activity"/>
    <property type="evidence" value="ECO:0007669"/>
    <property type="project" value="UniProtKB-UniRule"/>
</dbReference>
<dbReference type="CDD" id="cd01887">
    <property type="entry name" value="IF2_eIF5B"/>
    <property type="match status" value="1"/>
</dbReference>
<dbReference type="CDD" id="cd03702">
    <property type="entry name" value="IF2_mtIF2_II"/>
    <property type="match status" value="1"/>
</dbReference>
<dbReference type="CDD" id="cd03692">
    <property type="entry name" value="mtIF2_IVc"/>
    <property type="match status" value="1"/>
</dbReference>
<dbReference type="FunFam" id="2.40.30.10:FF:000007">
    <property type="entry name" value="Translation initiation factor IF-2"/>
    <property type="match status" value="1"/>
</dbReference>
<dbReference type="FunFam" id="2.40.30.10:FF:000008">
    <property type="entry name" value="Translation initiation factor IF-2"/>
    <property type="match status" value="1"/>
</dbReference>
<dbReference type="FunFam" id="3.30.56.50:FF:000001">
    <property type="entry name" value="Translation initiation factor IF-2"/>
    <property type="match status" value="1"/>
</dbReference>
<dbReference type="FunFam" id="3.40.50.10050:FF:000001">
    <property type="entry name" value="Translation initiation factor IF-2"/>
    <property type="match status" value="1"/>
</dbReference>
<dbReference type="FunFam" id="3.40.50.300:FF:000019">
    <property type="entry name" value="Translation initiation factor IF-2"/>
    <property type="match status" value="1"/>
</dbReference>
<dbReference type="Gene3D" id="3.40.50.300">
    <property type="entry name" value="P-loop containing nucleotide triphosphate hydrolases"/>
    <property type="match status" value="1"/>
</dbReference>
<dbReference type="Gene3D" id="3.30.56.50">
    <property type="entry name" value="Putative DNA-binding domain, N-terminal subdomain of bacterial translation initiation factor IF2"/>
    <property type="match status" value="1"/>
</dbReference>
<dbReference type="Gene3D" id="2.40.30.10">
    <property type="entry name" value="Translation factors"/>
    <property type="match status" value="2"/>
</dbReference>
<dbReference type="Gene3D" id="3.40.50.10050">
    <property type="entry name" value="Translation initiation factor IF- 2, domain 3"/>
    <property type="match status" value="1"/>
</dbReference>
<dbReference type="HAMAP" id="MF_00100_B">
    <property type="entry name" value="IF_2_B"/>
    <property type="match status" value="1"/>
</dbReference>
<dbReference type="InterPro" id="IPR009061">
    <property type="entry name" value="DNA-bd_dom_put_sf"/>
</dbReference>
<dbReference type="InterPro" id="IPR053905">
    <property type="entry name" value="EF-G-like_DII"/>
</dbReference>
<dbReference type="InterPro" id="IPR004161">
    <property type="entry name" value="EFTu-like_2"/>
</dbReference>
<dbReference type="InterPro" id="IPR013575">
    <property type="entry name" value="IF2_assoc_dom_bac"/>
</dbReference>
<dbReference type="InterPro" id="IPR044145">
    <property type="entry name" value="IF2_II"/>
</dbReference>
<dbReference type="InterPro" id="IPR006847">
    <property type="entry name" value="IF2_N"/>
</dbReference>
<dbReference type="InterPro" id="IPR027417">
    <property type="entry name" value="P-loop_NTPase"/>
</dbReference>
<dbReference type="InterPro" id="IPR005225">
    <property type="entry name" value="Small_GTP-bd"/>
</dbReference>
<dbReference type="InterPro" id="IPR000795">
    <property type="entry name" value="T_Tr_GTP-bd_dom"/>
</dbReference>
<dbReference type="InterPro" id="IPR000178">
    <property type="entry name" value="TF_IF2_bacterial-like"/>
</dbReference>
<dbReference type="InterPro" id="IPR015760">
    <property type="entry name" value="TIF_IF2"/>
</dbReference>
<dbReference type="InterPro" id="IPR023115">
    <property type="entry name" value="TIF_IF2_dom3"/>
</dbReference>
<dbReference type="InterPro" id="IPR036925">
    <property type="entry name" value="TIF_IF2_dom3_sf"/>
</dbReference>
<dbReference type="InterPro" id="IPR009000">
    <property type="entry name" value="Transl_B-barrel_sf"/>
</dbReference>
<dbReference type="NCBIfam" id="TIGR00487">
    <property type="entry name" value="IF-2"/>
    <property type="match status" value="1"/>
</dbReference>
<dbReference type="NCBIfam" id="TIGR00231">
    <property type="entry name" value="small_GTP"/>
    <property type="match status" value="1"/>
</dbReference>
<dbReference type="PANTHER" id="PTHR43381:SF5">
    <property type="entry name" value="TR-TYPE G DOMAIN-CONTAINING PROTEIN"/>
    <property type="match status" value="1"/>
</dbReference>
<dbReference type="PANTHER" id="PTHR43381">
    <property type="entry name" value="TRANSLATION INITIATION FACTOR IF-2-RELATED"/>
    <property type="match status" value="1"/>
</dbReference>
<dbReference type="Pfam" id="PF22042">
    <property type="entry name" value="EF-G_D2"/>
    <property type="match status" value="1"/>
</dbReference>
<dbReference type="Pfam" id="PF00009">
    <property type="entry name" value="GTP_EFTU"/>
    <property type="match status" value="1"/>
</dbReference>
<dbReference type="Pfam" id="PF03144">
    <property type="entry name" value="GTP_EFTU_D2"/>
    <property type="match status" value="1"/>
</dbReference>
<dbReference type="Pfam" id="PF11987">
    <property type="entry name" value="IF-2"/>
    <property type="match status" value="1"/>
</dbReference>
<dbReference type="Pfam" id="PF08364">
    <property type="entry name" value="IF2_assoc"/>
    <property type="match status" value="1"/>
</dbReference>
<dbReference type="Pfam" id="PF04760">
    <property type="entry name" value="IF2_N"/>
    <property type="match status" value="2"/>
</dbReference>
<dbReference type="SUPFAM" id="SSF52156">
    <property type="entry name" value="Initiation factor IF2/eIF5b, domain 3"/>
    <property type="match status" value="1"/>
</dbReference>
<dbReference type="SUPFAM" id="SSF52540">
    <property type="entry name" value="P-loop containing nucleoside triphosphate hydrolases"/>
    <property type="match status" value="1"/>
</dbReference>
<dbReference type="SUPFAM" id="SSF46955">
    <property type="entry name" value="Putative DNA-binding domain"/>
    <property type="match status" value="1"/>
</dbReference>
<dbReference type="SUPFAM" id="SSF50447">
    <property type="entry name" value="Translation proteins"/>
    <property type="match status" value="2"/>
</dbReference>
<dbReference type="PROSITE" id="PS51722">
    <property type="entry name" value="G_TR_2"/>
    <property type="match status" value="1"/>
</dbReference>
<dbReference type="PROSITE" id="PS01176">
    <property type="entry name" value="IF2"/>
    <property type="match status" value="1"/>
</dbReference>
<gene>
    <name evidence="2" type="primary">infB</name>
    <name type="ordered locus">NT01EI_0467</name>
</gene>
<keyword id="KW-0963">Cytoplasm</keyword>
<keyword id="KW-0342">GTP-binding</keyword>
<keyword id="KW-0396">Initiation factor</keyword>
<keyword id="KW-0547">Nucleotide-binding</keyword>
<keyword id="KW-0648">Protein biosynthesis</keyword>
<reference key="1">
    <citation type="submission" date="2009-03" db="EMBL/GenBank/DDBJ databases">
        <title>Complete genome sequence of Edwardsiella ictaluri 93-146.</title>
        <authorList>
            <person name="Williams M.L."/>
            <person name="Gillaspy A.F."/>
            <person name="Dyer D.W."/>
            <person name="Thune R.L."/>
            <person name="Waldbieser G.C."/>
            <person name="Schuster S.C."/>
            <person name="Gipson J."/>
            <person name="Zaitshik J."/>
            <person name="Landry C."/>
            <person name="Lawrence M.L."/>
        </authorList>
    </citation>
    <scope>NUCLEOTIDE SEQUENCE [LARGE SCALE GENOMIC DNA]</scope>
    <source>
        <strain>93-146</strain>
    </source>
</reference>